<comment type="function">
    <text evidence="1">Endonuclease that is involved in the suppression of homologous recombination and thus may have a key role in the control of bacterial genetic diversity.</text>
</comment>
<comment type="function">
    <text evidence="1">Acts as a ribosome collision sensor, splitting the ribosome into its 2 subunits. Detects stalled/collided 70S ribosomes which it binds and splits by an ATP-hydrolysis driven conformational change. Acts upstream of the ribosome quality control system (RQC), a ribosome-associated complex that mediates the extraction of incompletely synthesized nascent chains from stalled ribosomes and their subsequent degradation. Probably generates substrates for RQC.</text>
</comment>
<comment type="subunit">
    <text evidence="1">Homodimer. Binds to stalled ribosomes, contacting rRNA.</text>
</comment>
<comment type="similarity">
    <text evidence="1">Belongs to the DNA mismatch repair MutS family. MutS2 subfamily.</text>
</comment>
<sequence>MNKKILQILEYDKVKEQFMNALTTAQGQKELSDLVPLTDKDKIQLLFDEVADFRLLTQENGLLNLGKTNDLTEILRRLELEASLSGKEFVEIKKVIQLGINIQRFFDEAENVETPSLNITLEKLVDLSGLIKKLEIFDNAGSLYDNASLELMHIRSSIKSHQSEIRKIMQEMLTKNLASLSENVITIRNDRQVLPVKAENKNKIAGVVHDMSASGQTLYIEPNAVVSLNNKLNQKRIEERQEITRIYRELAEELKPYSFDIRQNAWLIGHIDFVRAKYLYLAANKASLPALTNDKDIILFAARHPLIDAKMVVANDIKFDRTLNTIVITGPNTGGKTITLKTVGLLTILAQSGLPILADDGSRIHLFDDIFADIGDEQSIEQSLSTFSSHMTNIVQILAQADENSLVLFDELGAGTDPKEGAALAIAILENLRKRNVKTMASTHYPELKAYGVKTQQVINASMEFNIDKMQPTYHLQLGVPGRSNALEISRRLGLPETIISEAGQQISGSEHDVNQMIEKLEEKTREVIESSRNIKKIERENQSLHKDLTKVYNQINRERDFELEKAQKEAQEVVKKASLEAQEILKNLNDKAALKPHEIIAARKELEGLAPTIDFSKNKVLKKAKAQRGLKQGAEVNVTSYGQRGKLIRLEKDGRWTVQMGSITTRLSEEEFEVIETPEQIQAKTKNVSKKVTSKVKAQLDLRGMRYEEAELELDNYIDQALLANLIQITIVHGIGTGVIREMVQKKLQKHRHIKSYEYAPINAGGSGATIAILK</sequence>
<evidence type="ECO:0000255" key="1">
    <source>
        <dbReference type="HAMAP-Rule" id="MF_00092"/>
    </source>
</evidence>
<dbReference type="EC" id="3.1.-.-" evidence="1"/>
<dbReference type="EC" id="3.6.4.-" evidence="1"/>
<dbReference type="EMBL" id="CP000425">
    <property type="protein sequence ID" value="ABJ73301.1"/>
    <property type="molecule type" value="Genomic_DNA"/>
</dbReference>
<dbReference type="RefSeq" id="WP_011676549.1">
    <property type="nucleotide sequence ID" value="NC_008527.1"/>
</dbReference>
<dbReference type="SMR" id="Q02XM1"/>
<dbReference type="KEGG" id="llc:LACR_1809"/>
<dbReference type="HOGENOM" id="CLU_011252_2_1_9"/>
<dbReference type="Proteomes" id="UP000000240">
    <property type="component" value="Chromosome"/>
</dbReference>
<dbReference type="GO" id="GO:0005524">
    <property type="term" value="F:ATP binding"/>
    <property type="evidence" value="ECO:0007669"/>
    <property type="project" value="UniProtKB-UniRule"/>
</dbReference>
<dbReference type="GO" id="GO:0016887">
    <property type="term" value="F:ATP hydrolysis activity"/>
    <property type="evidence" value="ECO:0007669"/>
    <property type="project" value="InterPro"/>
</dbReference>
<dbReference type="GO" id="GO:0140664">
    <property type="term" value="F:ATP-dependent DNA damage sensor activity"/>
    <property type="evidence" value="ECO:0007669"/>
    <property type="project" value="InterPro"/>
</dbReference>
<dbReference type="GO" id="GO:0004519">
    <property type="term" value="F:endonuclease activity"/>
    <property type="evidence" value="ECO:0007669"/>
    <property type="project" value="UniProtKB-UniRule"/>
</dbReference>
<dbReference type="GO" id="GO:0030983">
    <property type="term" value="F:mismatched DNA binding"/>
    <property type="evidence" value="ECO:0007669"/>
    <property type="project" value="InterPro"/>
</dbReference>
<dbReference type="GO" id="GO:0043023">
    <property type="term" value="F:ribosomal large subunit binding"/>
    <property type="evidence" value="ECO:0007669"/>
    <property type="project" value="UniProtKB-UniRule"/>
</dbReference>
<dbReference type="GO" id="GO:0019843">
    <property type="term" value="F:rRNA binding"/>
    <property type="evidence" value="ECO:0007669"/>
    <property type="project" value="UniProtKB-UniRule"/>
</dbReference>
<dbReference type="GO" id="GO:0006298">
    <property type="term" value="P:mismatch repair"/>
    <property type="evidence" value="ECO:0007669"/>
    <property type="project" value="InterPro"/>
</dbReference>
<dbReference type="GO" id="GO:0045910">
    <property type="term" value="P:negative regulation of DNA recombination"/>
    <property type="evidence" value="ECO:0007669"/>
    <property type="project" value="InterPro"/>
</dbReference>
<dbReference type="GO" id="GO:0072344">
    <property type="term" value="P:rescue of stalled ribosome"/>
    <property type="evidence" value="ECO:0007669"/>
    <property type="project" value="UniProtKB-UniRule"/>
</dbReference>
<dbReference type="CDD" id="cd03280">
    <property type="entry name" value="ABC_MutS2"/>
    <property type="match status" value="1"/>
</dbReference>
<dbReference type="FunFam" id="3.40.50.300:FF:000830">
    <property type="entry name" value="Endonuclease MutS2"/>
    <property type="match status" value="1"/>
</dbReference>
<dbReference type="Gene3D" id="3.30.1370.110">
    <property type="match status" value="1"/>
</dbReference>
<dbReference type="Gene3D" id="3.40.50.300">
    <property type="entry name" value="P-loop containing nucleotide triphosphate hydrolases"/>
    <property type="match status" value="1"/>
</dbReference>
<dbReference type="HAMAP" id="MF_00092">
    <property type="entry name" value="MutS2"/>
    <property type="match status" value="1"/>
</dbReference>
<dbReference type="InterPro" id="IPR000432">
    <property type="entry name" value="DNA_mismatch_repair_MutS_C"/>
</dbReference>
<dbReference type="InterPro" id="IPR007696">
    <property type="entry name" value="DNA_mismatch_repair_MutS_core"/>
</dbReference>
<dbReference type="InterPro" id="IPR036187">
    <property type="entry name" value="DNA_mismatch_repair_MutS_sf"/>
</dbReference>
<dbReference type="InterPro" id="IPR046893">
    <property type="entry name" value="MSSS"/>
</dbReference>
<dbReference type="InterPro" id="IPR045076">
    <property type="entry name" value="MutS"/>
</dbReference>
<dbReference type="InterPro" id="IPR005747">
    <property type="entry name" value="MutS2"/>
</dbReference>
<dbReference type="InterPro" id="IPR027417">
    <property type="entry name" value="P-loop_NTPase"/>
</dbReference>
<dbReference type="InterPro" id="IPR002625">
    <property type="entry name" value="Smr_dom"/>
</dbReference>
<dbReference type="InterPro" id="IPR036063">
    <property type="entry name" value="Smr_dom_sf"/>
</dbReference>
<dbReference type="NCBIfam" id="TIGR01069">
    <property type="entry name" value="mutS2"/>
    <property type="match status" value="1"/>
</dbReference>
<dbReference type="PANTHER" id="PTHR48466:SF2">
    <property type="entry name" value="OS10G0509000 PROTEIN"/>
    <property type="match status" value="1"/>
</dbReference>
<dbReference type="PANTHER" id="PTHR48466">
    <property type="entry name" value="OS10G0509000 PROTEIN-RELATED"/>
    <property type="match status" value="1"/>
</dbReference>
<dbReference type="Pfam" id="PF20297">
    <property type="entry name" value="MSSS"/>
    <property type="match status" value="1"/>
</dbReference>
<dbReference type="Pfam" id="PF00488">
    <property type="entry name" value="MutS_V"/>
    <property type="match status" value="1"/>
</dbReference>
<dbReference type="Pfam" id="PF01713">
    <property type="entry name" value="Smr"/>
    <property type="match status" value="1"/>
</dbReference>
<dbReference type="PIRSF" id="PIRSF005814">
    <property type="entry name" value="MutS_YshD"/>
    <property type="match status" value="1"/>
</dbReference>
<dbReference type="SMART" id="SM00534">
    <property type="entry name" value="MUTSac"/>
    <property type="match status" value="1"/>
</dbReference>
<dbReference type="SMART" id="SM00533">
    <property type="entry name" value="MUTSd"/>
    <property type="match status" value="1"/>
</dbReference>
<dbReference type="SMART" id="SM00463">
    <property type="entry name" value="SMR"/>
    <property type="match status" value="1"/>
</dbReference>
<dbReference type="SUPFAM" id="SSF48334">
    <property type="entry name" value="DNA repair protein MutS, domain III"/>
    <property type="match status" value="1"/>
</dbReference>
<dbReference type="SUPFAM" id="SSF52540">
    <property type="entry name" value="P-loop containing nucleoside triphosphate hydrolases"/>
    <property type="match status" value="1"/>
</dbReference>
<dbReference type="SUPFAM" id="SSF160443">
    <property type="entry name" value="SMR domain-like"/>
    <property type="match status" value="1"/>
</dbReference>
<dbReference type="PROSITE" id="PS00486">
    <property type="entry name" value="DNA_MISMATCH_REPAIR_2"/>
    <property type="match status" value="1"/>
</dbReference>
<dbReference type="PROSITE" id="PS50828">
    <property type="entry name" value="SMR"/>
    <property type="match status" value="1"/>
</dbReference>
<keyword id="KW-0067">ATP-binding</keyword>
<keyword id="KW-0238">DNA-binding</keyword>
<keyword id="KW-0255">Endonuclease</keyword>
<keyword id="KW-0378">Hydrolase</keyword>
<keyword id="KW-0540">Nuclease</keyword>
<keyword id="KW-0547">Nucleotide-binding</keyword>
<keyword id="KW-0694">RNA-binding</keyword>
<keyword id="KW-0699">rRNA-binding</keyword>
<reference key="1">
    <citation type="journal article" date="2006" name="Proc. Natl. Acad. Sci. U.S.A.">
        <title>Comparative genomics of the lactic acid bacteria.</title>
        <authorList>
            <person name="Makarova K.S."/>
            <person name="Slesarev A."/>
            <person name="Wolf Y.I."/>
            <person name="Sorokin A."/>
            <person name="Mirkin B."/>
            <person name="Koonin E.V."/>
            <person name="Pavlov A."/>
            <person name="Pavlova N."/>
            <person name="Karamychev V."/>
            <person name="Polouchine N."/>
            <person name="Shakhova V."/>
            <person name="Grigoriev I."/>
            <person name="Lou Y."/>
            <person name="Rohksar D."/>
            <person name="Lucas S."/>
            <person name="Huang K."/>
            <person name="Goodstein D.M."/>
            <person name="Hawkins T."/>
            <person name="Plengvidhya V."/>
            <person name="Welker D."/>
            <person name="Hughes J."/>
            <person name="Goh Y."/>
            <person name="Benson A."/>
            <person name="Baldwin K."/>
            <person name="Lee J.-H."/>
            <person name="Diaz-Muniz I."/>
            <person name="Dosti B."/>
            <person name="Smeianov V."/>
            <person name="Wechter W."/>
            <person name="Barabote R."/>
            <person name="Lorca G."/>
            <person name="Altermann E."/>
            <person name="Barrangou R."/>
            <person name="Ganesan B."/>
            <person name="Xie Y."/>
            <person name="Rawsthorne H."/>
            <person name="Tamir D."/>
            <person name="Parker C."/>
            <person name="Breidt F."/>
            <person name="Broadbent J.R."/>
            <person name="Hutkins R."/>
            <person name="O'Sullivan D."/>
            <person name="Steele J."/>
            <person name="Unlu G."/>
            <person name="Saier M.H. Jr."/>
            <person name="Klaenhammer T."/>
            <person name="Richardson P."/>
            <person name="Kozyavkin S."/>
            <person name="Weimer B.C."/>
            <person name="Mills D.A."/>
        </authorList>
    </citation>
    <scope>NUCLEOTIDE SEQUENCE [LARGE SCALE GENOMIC DNA]</scope>
    <source>
        <strain>SK11</strain>
    </source>
</reference>
<name>MUTS2_LACLS</name>
<protein>
    <recommendedName>
        <fullName evidence="1">Endonuclease MutS2</fullName>
        <ecNumber evidence="1">3.1.-.-</ecNumber>
    </recommendedName>
    <alternativeName>
        <fullName evidence="1">Ribosome-associated protein quality control-upstream factor</fullName>
        <shortName evidence="1">RQC-upstream factor</shortName>
        <shortName evidence="1">RqcU</shortName>
        <ecNumber evidence="1">3.6.4.-</ecNumber>
    </alternativeName>
</protein>
<proteinExistence type="inferred from homology"/>
<organism>
    <name type="scientific">Lactococcus lactis subsp. cremoris (strain SK11)</name>
    <dbReference type="NCBI Taxonomy" id="272622"/>
    <lineage>
        <taxon>Bacteria</taxon>
        <taxon>Bacillati</taxon>
        <taxon>Bacillota</taxon>
        <taxon>Bacilli</taxon>
        <taxon>Lactobacillales</taxon>
        <taxon>Streptococcaceae</taxon>
        <taxon>Lactococcus</taxon>
        <taxon>Lactococcus cremoris subsp. cremoris</taxon>
    </lineage>
</organism>
<accession>Q02XM1</accession>
<gene>
    <name evidence="1" type="primary">mutS2</name>
    <name evidence="1" type="synonym">rqcU</name>
    <name type="ordered locus">LACR_1809</name>
</gene>
<feature type="chain" id="PRO_1000093369" description="Endonuclease MutS2">
    <location>
        <begin position="1"/>
        <end position="776"/>
    </location>
</feature>
<feature type="domain" description="Smr" evidence="1">
    <location>
        <begin position="701"/>
        <end position="776"/>
    </location>
</feature>
<feature type="binding site" evidence="1">
    <location>
        <begin position="330"/>
        <end position="337"/>
    </location>
    <ligand>
        <name>ATP</name>
        <dbReference type="ChEBI" id="CHEBI:30616"/>
    </ligand>
</feature>